<sequence>MRVKLTLACTECRQRNYNTMKNKKNDPDRLEMKKYCPFCHKHTLHKETK</sequence>
<accession>Q97EG2</accession>
<organism>
    <name type="scientific">Clostridium acetobutylicum (strain ATCC 824 / DSM 792 / JCM 1419 / IAM 19013 / LMG 5710 / NBRC 13948 / NRRL B-527 / VKM B-1787 / 2291 / W)</name>
    <dbReference type="NCBI Taxonomy" id="272562"/>
    <lineage>
        <taxon>Bacteria</taxon>
        <taxon>Bacillati</taxon>
        <taxon>Bacillota</taxon>
        <taxon>Clostridia</taxon>
        <taxon>Eubacteriales</taxon>
        <taxon>Clostridiaceae</taxon>
        <taxon>Clostridium</taxon>
    </lineage>
</organism>
<name>RL33_CLOAB</name>
<keyword id="KW-1185">Reference proteome</keyword>
<keyword id="KW-0687">Ribonucleoprotein</keyword>
<keyword id="KW-0689">Ribosomal protein</keyword>
<proteinExistence type="inferred from homology"/>
<protein>
    <recommendedName>
        <fullName evidence="1">Large ribosomal subunit protein bL33</fullName>
    </recommendedName>
    <alternativeName>
        <fullName evidence="2">50S ribosomal protein L33</fullName>
    </alternativeName>
</protein>
<evidence type="ECO:0000255" key="1">
    <source>
        <dbReference type="HAMAP-Rule" id="MF_00294"/>
    </source>
</evidence>
<evidence type="ECO:0000305" key="2"/>
<comment type="similarity">
    <text evidence="1">Belongs to the bacterial ribosomal protein bL33 family.</text>
</comment>
<gene>
    <name evidence="1" type="primary">rpmG</name>
    <name type="ordered locus">CA_C3151</name>
</gene>
<reference key="1">
    <citation type="journal article" date="2001" name="J. Bacteriol.">
        <title>Genome sequence and comparative analysis of the solvent-producing bacterium Clostridium acetobutylicum.</title>
        <authorList>
            <person name="Noelling J."/>
            <person name="Breton G."/>
            <person name="Omelchenko M.V."/>
            <person name="Makarova K.S."/>
            <person name="Zeng Q."/>
            <person name="Gibson R."/>
            <person name="Lee H.M."/>
            <person name="Dubois J."/>
            <person name="Qiu D."/>
            <person name="Hitti J."/>
            <person name="Wolf Y.I."/>
            <person name="Tatusov R.L."/>
            <person name="Sabathe F."/>
            <person name="Doucette-Stamm L.A."/>
            <person name="Soucaille P."/>
            <person name="Daly M.J."/>
            <person name="Bennett G.N."/>
            <person name="Koonin E.V."/>
            <person name="Smith D.R."/>
        </authorList>
    </citation>
    <scope>NUCLEOTIDE SEQUENCE [LARGE SCALE GENOMIC DNA]</scope>
    <source>
        <strain>ATCC 824 / DSM 792 / JCM 1419 / IAM 19013 / LMG 5710 / NBRC 13948 / NRRL B-527 / VKM B-1787 / 2291 / W</strain>
    </source>
</reference>
<dbReference type="EMBL" id="AE001437">
    <property type="protein sequence ID" value="AAK81088.1"/>
    <property type="molecule type" value="Genomic_DNA"/>
</dbReference>
<dbReference type="PIR" id="E97287">
    <property type="entry name" value="E97287"/>
</dbReference>
<dbReference type="RefSeq" id="NP_349748.1">
    <property type="nucleotide sequence ID" value="NC_003030.1"/>
</dbReference>
<dbReference type="RefSeq" id="WP_010966428.1">
    <property type="nucleotide sequence ID" value="NC_003030.1"/>
</dbReference>
<dbReference type="SMR" id="Q97EG2"/>
<dbReference type="STRING" id="272562.CA_C3151"/>
<dbReference type="KEGG" id="cac:CA_C3151"/>
<dbReference type="PATRIC" id="fig|272562.8.peg.3331"/>
<dbReference type="eggNOG" id="COG0267">
    <property type="taxonomic scope" value="Bacteria"/>
</dbReference>
<dbReference type="HOGENOM" id="CLU_190949_0_2_9"/>
<dbReference type="OrthoDB" id="9801333at2"/>
<dbReference type="Proteomes" id="UP000000814">
    <property type="component" value="Chromosome"/>
</dbReference>
<dbReference type="GO" id="GO:0005737">
    <property type="term" value="C:cytoplasm"/>
    <property type="evidence" value="ECO:0007669"/>
    <property type="project" value="UniProtKB-ARBA"/>
</dbReference>
<dbReference type="GO" id="GO:1990904">
    <property type="term" value="C:ribonucleoprotein complex"/>
    <property type="evidence" value="ECO:0007669"/>
    <property type="project" value="UniProtKB-KW"/>
</dbReference>
<dbReference type="GO" id="GO:0005840">
    <property type="term" value="C:ribosome"/>
    <property type="evidence" value="ECO:0007669"/>
    <property type="project" value="UniProtKB-KW"/>
</dbReference>
<dbReference type="GO" id="GO:0003735">
    <property type="term" value="F:structural constituent of ribosome"/>
    <property type="evidence" value="ECO:0007669"/>
    <property type="project" value="InterPro"/>
</dbReference>
<dbReference type="GO" id="GO:0006412">
    <property type="term" value="P:translation"/>
    <property type="evidence" value="ECO:0007669"/>
    <property type="project" value="UniProtKB-UniRule"/>
</dbReference>
<dbReference type="Gene3D" id="2.20.28.120">
    <property type="entry name" value="Ribosomal protein L33"/>
    <property type="match status" value="1"/>
</dbReference>
<dbReference type="HAMAP" id="MF_00294">
    <property type="entry name" value="Ribosomal_bL33"/>
    <property type="match status" value="1"/>
</dbReference>
<dbReference type="InterPro" id="IPR001705">
    <property type="entry name" value="Ribosomal_bL33"/>
</dbReference>
<dbReference type="InterPro" id="IPR018264">
    <property type="entry name" value="Ribosomal_bL33_CS"/>
</dbReference>
<dbReference type="InterPro" id="IPR038584">
    <property type="entry name" value="Ribosomal_bL33_sf"/>
</dbReference>
<dbReference type="InterPro" id="IPR011332">
    <property type="entry name" value="Ribosomal_zn-bd"/>
</dbReference>
<dbReference type="NCBIfam" id="NF001764">
    <property type="entry name" value="PRK00504.1"/>
    <property type="match status" value="1"/>
</dbReference>
<dbReference type="NCBIfam" id="NF001860">
    <property type="entry name" value="PRK00595.1"/>
    <property type="match status" value="1"/>
</dbReference>
<dbReference type="NCBIfam" id="TIGR01023">
    <property type="entry name" value="rpmG_bact"/>
    <property type="match status" value="1"/>
</dbReference>
<dbReference type="PANTHER" id="PTHR43168">
    <property type="entry name" value="50S RIBOSOMAL PROTEIN L33, CHLOROPLASTIC"/>
    <property type="match status" value="1"/>
</dbReference>
<dbReference type="PANTHER" id="PTHR43168:SF2">
    <property type="entry name" value="LARGE RIBOSOMAL SUBUNIT PROTEIN BL33C"/>
    <property type="match status" value="1"/>
</dbReference>
<dbReference type="Pfam" id="PF00471">
    <property type="entry name" value="Ribosomal_L33"/>
    <property type="match status" value="1"/>
</dbReference>
<dbReference type="SUPFAM" id="SSF57829">
    <property type="entry name" value="Zn-binding ribosomal proteins"/>
    <property type="match status" value="1"/>
</dbReference>
<dbReference type="PROSITE" id="PS00582">
    <property type="entry name" value="RIBOSOMAL_L33"/>
    <property type="match status" value="1"/>
</dbReference>
<feature type="chain" id="PRO_0000170154" description="Large ribosomal subunit protein bL33">
    <location>
        <begin position="1"/>
        <end position="49"/>
    </location>
</feature>